<reference key="1">
    <citation type="journal article" date="2003" name="Nat. Genet.">
        <title>Comparative analysis of the genome sequences of Bordetella pertussis, Bordetella parapertussis and Bordetella bronchiseptica.</title>
        <authorList>
            <person name="Parkhill J."/>
            <person name="Sebaihia M."/>
            <person name="Preston A."/>
            <person name="Murphy L.D."/>
            <person name="Thomson N.R."/>
            <person name="Harris D.E."/>
            <person name="Holden M.T.G."/>
            <person name="Churcher C.M."/>
            <person name="Bentley S.D."/>
            <person name="Mungall K.L."/>
            <person name="Cerdeno-Tarraga A.-M."/>
            <person name="Temple L."/>
            <person name="James K.D."/>
            <person name="Harris B."/>
            <person name="Quail M.A."/>
            <person name="Achtman M."/>
            <person name="Atkin R."/>
            <person name="Baker S."/>
            <person name="Basham D."/>
            <person name="Bason N."/>
            <person name="Cherevach I."/>
            <person name="Chillingworth T."/>
            <person name="Collins M."/>
            <person name="Cronin A."/>
            <person name="Davis P."/>
            <person name="Doggett J."/>
            <person name="Feltwell T."/>
            <person name="Goble A."/>
            <person name="Hamlin N."/>
            <person name="Hauser H."/>
            <person name="Holroyd S."/>
            <person name="Jagels K."/>
            <person name="Leather S."/>
            <person name="Moule S."/>
            <person name="Norberczak H."/>
            <person name="O'Neil S."/>
            <person name="Ormond D."/>
            <person name="Price C."/>
            <person name="Rabbinowitsch E."/>
            <person name="Rutter S."/>
            <person name="Sanders M."/>
            <person name="Saunders D."/>
            <person name="Seeger K."/>
            <person name="Sharp S."/>
            <person name="Simmonds M."/>
            <person name="Skelton J."/>
            <person name="Squares R."/>
            <person name="Squares S."/>
            <person name="Stevens K."/>
            <person name="Unwin L."/>
            <person name="Whitehead S."/>
            <person name="Barrell B.G."/>
            <person name="Maskell D.J."/>
        </authorList>
    </citation>
    <scope>NUCLEOTIDE SEQUENCE [LARGE SCALE GENOMIC DNA]</scope>
    <source>
        <strain>Tohama I / ATCC BAA-589 / NCTC 13251</strain>
    </source>
</reference>
<reference key="2">
    <citation type="journal article" date="1989" name="EMBO J.">
        <title>Identification of residues essential for catalysis and binding of calmodulin in Bordetella pertussis adenylate cyclase by site-directed mutagenesis.</title>
        <authorList>
            <person name="Glaser P."/>
            <person name="Elmaoglou-Lazaridou A."/>
            <person name="Krin E."/>
            <person name="Ladant D."/>
            <person name="Barzu O."/>
            <person name="Danchin A."/>
        </authorList>
    </citation>
    <scope>FUNCTION</scope>
    <scope>CATALYTIC ACTIVITY</scope>
    <scope>SUBCELLULAR LOCATION</scope>
    <scope>MUTAGENESIS OF LYS-58; LYS-65 AND TRP-242</scope>
</reference>
<reference key="3">
    <citation type="journal article" date="1991" name="EMBO J.">
        <title>Functional consequences of single amino acid substitutions in calmodulin-activated adenylate cyclase of Bordetella pertussis.</title>
        <authorList>
            <person name="Glaser P."/>
            <person name="Munier H."/>
            <person name="Gilles A.-M."/>
            <person name="Krin E."/>
            <person name="Porumb T."/>
            <person name="Barzu O."/>
            <person name="Sarfati R."/>
            <person name="Pellecuer C."/>
            <person name="Danchin A."/>
        </authorList>
    </citation>
    <scope>FUNCTION</scope>
    <scope>CATALYTIC ACTIVITY</scope>
    <scope>MUTAGENESIS OF ASP-188; ASP-190; HIS-298 AND GLU-301</scope>
</reference>
<reference key="4">
    <citation type="journal article" date="1991" name="Eur. J. Biochem.">
        <title>Isolation and characterization of catalytic and calmodulin-binding domains of Bordetella pertussis adenylate cyclase.</title>
        <authorList>
            <person name="Munier H."/>
            <person name="Gilles A.-M."/>
            <person name="Glaser P."/>
            <person name="Danchin A."/>
            <person name="Sarfati R."/>
            <person name="Barzu O."/>
        </authorList>
    </citation>
    <scope>DOMAINS</scope>
</reference>
<reference key="5">
    <citation type="journal article" date="1993" name="Adv. Second Messenger Phosphoprotein Res.">
        <title>Phylogeny of adenylyl cyclases.</title>
        <authorList>
            <person name="Danchin A."/>
        </authorList>
    </citation>
    <scope>REVIEW</scope>
</reference>
<reference key="6">
    <citation type="journal article" date="1994" name="J. Biol. Chem.">
        <title>Adenylate cyclase toxin from Bordetella pertussis produces ion conductance across artificial lipid bilayers in a calcium- and polarity-dependent manner.</title>
        <authorList>
            <person name="Szabo G."/>
            <person name="Gray M.C."/>
            <person name="Hewlett E.L."/>
        </authorList>
    </citation>
    <scope>FUNCTION</scope>
    <scope>SUBCELLULAR LOCATION</scope>
</reference>
<reference key="7">
    <citation type="journal article" date="1994" name="Science">
        <title>Internal lysine palmitoylation in adenylate cyclase toxin from Bordetella pertussis.</title>
        <authorList>
            <person name="Hackett M."/>
            <person name="Guo L."/>
            <person name="Shabanowitz J."/>
            <person name="Hunt D.F."/>
            <person name="Hewlett E.L."/>
        </authorList>
    </citation>
    <scope>PALMITOYLATION AT LYS-983</scope>
</reference>
<reference key="8">
    <citation type="journal article" date="1999" name="J. Biol. Chem.">
        <title>The conserved lysine 860 in the additional fatty-acylation site of Bordetella pertussis adenylate cyclase is crucial for toxin function independently of its acylation status.</title>
        <authorList>
            <person name="Basar T."/>
            <person name="Havlicek V."/>
            <person name="Bezouskova S."/>
            <person name="Halada P."/>
            <person name="Hackett M."/>
            <person name="Sebo P."/>
        </authorList>
    </citation>
    <scope>PALMITOYLATION AT LYS-860</scope>
</reference>
<reference key="9">
    <citation type="journal article" date="2001" name="J. Biol. Chem.">
        <title>Acylation of lysine 983 is sufficient for toxin activity of Bordetella pertussis adenylate cyclase. Substitutions of alanine 140 modulate acylation site selectivity of the toxin acyltransferase CyaC.</title>
        <authorList>
            <person name="Basar T."/>
            <person name="Havlicek V."/>
            <person name="Bezouskova S."/>
            <person name="Hackett M."/>
            <person name="Sebo P."/>
        </authorList>
    </citation>
    <scope>PALMITOYLATION AT LYS-860 AND LYS-983</scope>
</reference>
<reference key="10">
    <citation type="journal article" date="2017" name="Biochim. Biophys. Acta">
        <title>Acylation of the Bordetella pertussis CyaA-hemolysin: Functional implications for efficient membrane insertion and pore formation.</title>
        <authorList>
            <person name="Meetum K."/>
            <person name="Imtong C."/>
            <person name="Katzenmeier G."/>
            <person name="Angsuthanasombat C."/>
        </authorList>
    </citation>
    <scope>PALMITOYLATION AT LYS-983</scope>
</reference>
<reference key="11">
    <citation type="journal article" date="2018" name="Biochem. Biophys. Res. Commun.">
        <title>Structural requirement of the hydrophobic region of the Bordetella pertussis CyaA-hemolysin for functional association with CyaC-acyltransferase in toxin acylation.</title>
        <authorList>
            <person name="Raksanoh V."/>
            <person name="Prangkio P."/>
            <person name="Imtong C."/>
            <person name="Thamwiriyasati N."/>
            <person name="Suvarnapunya K."/>
            <person name="Shank L."/>
            <person name="Angsuthanasombat C."/>
        </authorList>
    </citation>
    <scope>PALMITOYLATION AT LYS-983</scope>
</reference>
<reference key="12">
    <citation type="journal article" date="2020" name="Arch. Biochem. Biophys.">
        <title>Preferential modification of CyaA-hemolysin by CyaC-acyltransferase through the catalytic Ser30-His33 dyad in esterolysis of palmitoyl-donor substrate devoid of acyl carrier proteins.</title>
        <authorList>
            <person name="Yentongchai M."/>
            <person name="Thamwiriyasati N."/>
            <person name="Imtong C."/>
            <person name="Li H.C."/>
            <person name="Angsuthanasombat C."/>
        </authorList>
    </citation>
    <scope>PALMITOYLATION AT LYS-983</scope>
</reference>
<reference key="13">
    <citation type="journal article" date="2020" name="J. Biol. Chem.">
        <title>Acyltransferase-mediated selection of the length of the fatty acyl chain and of the acylation site governs activation of bacterial RTX toxins.</title>
        <authorList>
            <person name="Osickova A."/>
            <person name="Khaliq H."/>
            <person name="Masin J."/>
            <person name="Jurnecka D."/>
            <person name="Sukova A."/>
            <person name="Fiser R."/>
            <person name="Holubova J."/>
            <person name="Stanek O."/>
            <person name="Sebo P."/>
            <person name="Osicka R."/>
        </authorList>
    </citation>
    <scope>PALMITOYLATION AT LYS-860 AND LYS-983</scope>
    <scope>MUTAGENESIS OF LYS-860</scope>
</reference>
<organism>
    <name type="scientific">Bordetella pertussis (strain Tohama I / ATCC BAA-589 / NCTC 13251)</name>
    <dbReference type="NCBI Taxonomy" id="257313"/>
    <lineage>
        <taxon>Bacteria</taxon>
        <taxon>Pseudomonadati</taxon>
        <taxon>Pseudomonadota</taxon>
        <taxon>Betaproteobacteria</taxon>
        <taxon>Burkholderiales</taxon>
        <taxon>Alcaligenaceae</taxon>
        <taxon>Bordetella</taxon>
    </lineage>
</organism>
<accession>P0DKX7</accession>
<accession>P15318</accession>
<proteinExistence type="evidence at protein level"/>
<evidence type="ECO:0000250" key="1">
    <source>
        <dbReference type="UniProtKB" id="J7QLC0"/>
    </source>
</evidence>
<evidence type="ECO:0000255" key="2"/>
<evidence type="ECO:0000256" key="3">
    <source>
        <dbReference type="SAM" id="MobiDB-lite"/>
    </source>
</evidence>
<evidence type="ECO:0000269" key="4">
    <source>
    </source>
</evidence>
<evidence type="ECO:0000269" key="5">
    <source>
    </source>
</evidence>
<evidence type="ECO:0000269" key="6">
    <source>
    </source>
</evidence>
<evidence type="ECO:0000269" key="7">
    <source>
    </source>
</evidence>
<evidence type="ECO:0000269" key="8">
    <source>
    </source>
</evidence>
<evidence type="ECO:0000269" key="9">
    <source>
    </source>
</evidence>
<evidence type="ECO:0000269" key="10">
    <source>
    </source>
</evidence>
<evidence type="ECO:0000269" key="11">
    <source>
    </source>
</evidence>
<evidence type="ECO:0000269" key="12">
    <source>
    </source>
</evidence>
<evidence type="ECO:0000269" key="13">
    <source>
    </source>
</evidence>
<evidence type="ECO:0000305" key="14"/>
<evidence type="ECO:0000305" key="15">
    <source>
    </source>
</evidence>
<evidence type="ECO:0000305" key="16">
    <source>
    </source>
</evidence>
<evidence type="ECO:0007829" key="17">
    <source>
        <dbReference type="PDB" id="1YRT"/>
    </source>
</evidence>
<evidence type="ECO:0007829" key="18">
    <source>
        <dbReference type="PDB" id="1ZOT"/>
    </source>
</evidence>
<evidence type="ECO:0007829" key="19">
    <source>
        <dbReference type="PDB" id="5CXL"/>
    </source>
</evidence>
<evidence type="ECO:0007829" key="20">
    <source>
        <dbReference type="PDB" id="6SUS"/>
    </source>
</evidence>
<evidence type="ECO:0007829" key="21">
    <source>
        <dbReference type="PDB" id="6YNU"/>
    </source>
</evidence>
<evidence type="ECO:0007829" key="22">
    <source>
        <dbReference type="PDB" id="7RAH"/>
    </source>
</evidence>
<evidence type="ECO:0007829" key="23">
    <source>
        <dbReference type="PDB" id="7USL"/>
    </source>
</evidence>
<dbReference type="EC" id="4.6.1.1" evidence="6 7"/>
<dbReference type="EMBL" id="BX640413">
    <property type="protein sequence ID" value="CAE41066.1"/>
    <property type="molecule type" value="Genomic_DNA"/>
</dbReference>
<dbReference type="PIR" id="S00893">
    <property type="entry name" value="OYBRC"/>
</dbReference>
<dbReference type="RefSeq" id="NP_879578.1">
    <property type="nucleotide sequence ID" value="NC_002929.2"/>
</dbReference>
<dbReference type="RefSeq" id="WP_010929995.1">
    <property type="nucleotide sequence ID" value="NZ_CP039022.1"/>
</dbReference>
<dbReference type="PDB" id="1YRT">
    <property type="method" value="X-ray"/>
    <property type="resolution" value="2.10 A"/>
    <property type="chains" value="A=1-364"/>
</dbReference>
<dbReference type="PDB" id="1YRU">
    <property type="method" value="X-ray"/>
    <property type="resolution" value="2.50 A"/>
    <property type="chains" value="A=1-364"/>
</dbReference>
<dbReference type="PDB" id="1ZOT">
    <property type="method" value="X-ray"/>
    <property type="resolution" value="2.20 A"/>
    <property type="chains" value="A=7-364"/>
</dbReference>
<dbReference type="PDB" id="2COL">
    <property type="method" value="X-ray"/>
    <property type="resolution" value="2.20 A"/>
    <property type="chains" value="A=7-362"/>
</dbReference>
<dbReference type="PDB" id="5CXL">
    <property type="method" value="X-ray"/>
    <property type="resolution" value="1.45 A"/>
    <property type="chains" value="A/B=1529-1681"/>
</dbReference>
<dbReference type="PDB" id="6SUS">
    <property type="method" value="X-ray"/>
    <property type="resolution" value="1.76 A"/>
    <property type="chains" value="A=1371-1690"/>
</dbReference>
<dbReference type="PDB" id="6YNS">
    <property type="method" value="X-ray"/>
    <property type="resolution" value="3.94 A"/>
    <property type="chains" value="N/O/Q/R/S/T/U/V/W/X/Y/Z/a/b/c/d/e/f/g/h/i/j/k/l=458-481"/>
</dbReference>
<dbReference type="PDB" id="6YNU">
    <property type="method" value="X-ray"/>
    <property type="resolution" value="3.12 A"/>
    <property type="chains" value="B/D=458-481"/>
</dbReference>
<dbReference type="PDB" id="7RAH">
    <property type="method" value="X-ray"/>
    <property type="resolution" value="2.60 A"/>
    <property type="chains" value="E=1015-1706"/>
</dbReference>
<dbReference type="PDB" id="7USL">
    <property type="method" value="EM"/>
    <property type="resolution" value="2.70 A"/>
    <property type="chains" value="C=751-1706"/>
</dbReference>
<dbReference type="PDBsum" id="1YRT"/>
<dbReference type="PDBsum" id="1YRU"/>
<dbReference type="PDBsum" id="1ZOT"/>
<dbReference type="PDBsum" id="2COL"/>
<dbReference type="PDBsum" id="5CXL"/>
<dbReference type="PDBsum" id="6SUS"/>
<dbReference type="PDBsum" id="6YNS"/>
<dbReference type="PDBsum" id="6YNU"/>
<dbReference type="PDBsum" id="7RAH"/>
<dbReference type="PDBsum" id="7USL"/>
<dbReference type="BMRB" id="P0DKX7"/>
<dbReference type="SASBDB" id="P0DKX7"/>
<dbReference type="SMR" id="P0DKX7"/>
<dbReference type="IntAct" id="P0DKX7">
    <property type="interactions" value="1"/>
</dbReference>
<dbReference type="STRING" id="257313.BP0760"/>
<dbReference type="PaxDb" id="257313-BP0760"/>
<dbReference type="ABCD" id="P0DKX7">
    <property type="antibodies" value="4 sequenced antibodies"/>
</dbReference>
<dbReference type="GeneID" id="69600712"/>
<dbReference type="KEGG" id="bpe:BP0760"/>
<dbReference type="PATRIC" id="fig|257313.5.peg.813"/>
<dbReference type="eggNOG" id="COG2931">
    <property type="taxonomic scope" value="Bacteria"/>
</dbReference>
<dbReference type="HOGENOM" id="CLU_239696_0_0_4"/>
<dbReference type="BRENDA" id="4.6.1.1">
    <property type="organism ID" value="899"/>
</dbReference>
<dbReference type="EvolutionaryTrace" id="P0DKX7"/>
<dbReference type="PHI-base" id="PHI:11897"/>
<dbReference type="Proteomes" id="UP000002676">
    <property type="component" value="Chromosome"/>
</dbReference>
<dbReference type="GO" id="GO:0005576">
    <property type="term" value="C:extracellular region"/>
    <property type="evidence" value="ECO:0007669"/>
    <property type="project" value="UniProtKB-SubCell"/>
</dbReference>
<dbReference type="GO" id="GO:0020002">
    <property type="term" value="C:host cell plasma membrane"/>
    <property type="evidence" value="ECO:0007669"/>
    <property type="project" value="UniProtKB-SubCell"/>
</dbReference>
<dbReference type="GO" id="GO:0016020">
    <property type="term" value="C:membrane"/>
    <property type="evidence" value="ECO:0007669"/>
    <property type="project" value="UniProtKB-KW"/>
</dbReference>
<dbReference type="GO" id="GO:0004016">
    <property type="term" value="F:adenylate cyclase activity"/>
    <property type="evidence" value="ECO:0000314"/>
    <property type="project" value="UniProtKB"/>
</dbReference>
<dbReference type="GO" id="GO:0005524">
    <property type="term" value="F:ATP binding"/>
    <property type="evidence" value="ECO:0007669"/>
    <property type="project" value="UniProtKB-KW"/>
</dbReference>
<dbReference type="GO" id="GO:0005509">
    <property type="term" value="F:calcium ion binding"/>
    <property type="evidence" value="ECO:0007669"/>
    <property type="project" value="InterPro"/>
</dbReference>
<dbReference type="GO" id="GO:0008294">
    <property type="term" value="F:calcium- and calmodulin-responsive adenylate cyclase activity"/>
    <property type="evidence" value="ECO:0007669"/>
    <property type="project" value="InterPro"/>
</dbReference>
<dbReference type="GO" id="GO:0005516">
    <property type="term" value="F:calmodulin binding"/>
    <property type="evidence" value="ECO:0007669"/>
    <property type="project" value="UniProtKB-KW"/>
</dbReference>
<dbReference type="GO" id="GO:0015267">
    <property type="term" value="F:channel activity"/>
    <property type="evidence" value="ECO:0000314"/>
    <property type="project" value="UniProtKB"/>
</dbReference>
<dbReference type="GO" id="GO:0090729">
    <property type="term" value="F:toxin activity"/>
    <property type="evidence" value="ECO:0007669"/>
    <property type="project" value="UniProtKB-KW"/>
</dbReference>
<dbReference type="GO" id="GO:0006171">
    <property type="term" value="P:cAMP biosynthetic process"/>
    <property type="evidence" value="ECO:0000314"/>
    <property type="project" value="UniProtKB"/>
</dbReference>
<dbReference type="GO" id="GO:0044179">
    <property type="term" value="P:hemolysis in another organism"/>
    <property type="evidence" value="ECO:0000314"/>
    <property type="project" value="UniProtKB"/>
</dbReference>
<dbReference type="GO" id="GO:0007204">
    <property type="term" value="P:positive regulation of cytosolic calcium ion concentration"/>
    <property type="evidence" value="ECO:0000314"/>
    <property type="project" value="CACAO"/>
</dbReference>
<dbReference type="GO" id="GO:0141042">
    <property type="term" value="P:symbiont-mediated cAMP intoxication of host cell"/>
    <property type="evidence" value="ECO:0000269"/>
    <property type="project" value="SigSci"/>
</dbReference>
<dbReference type="FunFam" id="2.150.10.10:FF:000003">
    <property type="entry name" value="Bifunctional hemolysin/adenylate cyclase"/>
    <property type="match status" value="3"/>
</dbReference>
<dbReference type="Gene3D" id="1.10.150.920">
    <property type="match status" value="1"/>
</dbReference>
<dbReference type="Gene3D" id="3.30.70.1720">
    <property type="match status" value="1"/>
</dbReference>
<dbReference type="Gene3D" id="3.90.1760.10">
    <property type="entry name" value="Anthrax toxin, edema factor, central domain"/>
    <property type="match status" value="1"/>
</dbReference>
<dbReference type="Gene3D" id="2.150.10.10">
    <property type="entry name" value="Serralysin-like metalloprotease, C-terminal"/>
    <property type="match status" value="5"/>
</dbReference>
<dbReference type="InterPro" id="IPR035099">
    <property type="entry name" value="Anthrax_toxin_C-terminal"/>
</dbReference>
<dbReference type="InterPro" id="IPR005165">
    <property type="entry name" value="Anthrax_toxin_edema_cen"/>
</dbReference>
<dbReference type="InterPro" id="IPR037017">
    <property type="entry name" value="Anthrax_toxin_edema_cen_sf"/>
</dbReference>
<dbReference type="InterPro" id="IPR010566">
    <property type="entry name" value="Haemolys_ca-bd"/>
</dbReference>
<dbReference type="InterPro" id="IPR018511">
    <property type="entry name" value="Hemolysin-typ_Ca-bd_CS"/>
</dbReference>
<dbReference type="InterPro" id="IPR001343">
    <property type="entry name" value="Hemolysn_Ca-bd"/>
</dbReference>
<dbReference type="InterPro" id="IPR018504">
    <property type="entry name" value="RTX_pore_form"/>
</dbReference>
<dbReference type="InterPro" id="IPR050557">
    <property type="entry name" value="RTX_toxin/Mannuronan_C5-epim"/>
</dbReference>
<dbReference type="InterPro" id="IPR003995">
    <property type="entry name" value="RTX_toxin_determinant-A"/>
</dbReference>
<dbReference type="InterPro" id="IPR011049">
    <property type="entry name" value="Serralysin-like_metalloprot_C"/>
</dbReference>
<dbReference type="PANTHER" id="PTHR38340">
    <property type="entry name" value="S-LAYER PROTEIN"/>
    <property type="match status" value="1"/>
</dbReference>
<dbReference type="PANTHER" id="PTHR38340:SF1">
    <property type="entry name" value="S-LAYER PROTEIN"/>
    <property type="match status" value="1"/>
</dbReference>
<dbReference type="Pfam" id="PF03497">
    <property type="entry name" value="Anthrax_toxA"/>
    <property type="match status" value="1"/>
</dbReference>
<dbReference type="Pfam" id="PF06594">
    <property type="entry name" value="HCBP_related"/>
    <property type="match status" value="1"/>
</dbReference>
<dbReference type="Pfam" id="PF00353">
    <property type="entry name" value="HemolysinCabind"/>
    <property type="match status" value="8"/>
</dbReference>
<dbReference type="Pfam" id="PF02382">
    <property type="entry name" value="RTX"/>
    <property type="match status" value="1"/>
</dbReference>
<dbReference type="PRINTS" id="PR00313">
    <property type="entry name" value="CABNDNGRPT"/>
</dbReference>
<dbReference type="PRINTS" id="PR01488">
    <property type="entry name" value="RTXTOXINA"/>
</dbReference>
<dbReference type="SUPFAM" id="SSF81298">
    <property type="entry name" value="Adenylylcyclase toxin (the edema factor)"/>
    <property type="match status" value="1"/>
</dbReference>
<dbReference type="SUPFAM" id="SSF51120">
    <property type="entry name" value="beta-Roll"/>
    <property type="match status" value="5"/>
</dbReference>
<dbReference type="PROSITE" id="PS00330">
    <property type="entry name" value="HEMOLYSIN_CALCIUM"/>
    <property type="match status" value="5"/>
</dbReference>
<comment type="function">
    <text evidence="6 7">Bifunctional adenylate cyclase toxin-hemolysin that plays a crucial role in host colonization (PubMed:2050107, PubMed:2542030). It causes whooping cough by acting on mammalian cells by elevating cAMP-concentration and thus disrupts normal cell function (PubMed:2050107, PubMed:2542030).</text>
</comment>
<comment type="function">
    <molecule>Calmodulin-sensitive adenylate cyclase</molecule>
    <text evidence="6 7">Adenylate cyclase that is activated by host intracellular calmodulin and catalyzes un-regulated conversion of ATP to cAMP, thereby impairing microbicidal functions of immune effector cells and inducing apoptosis of lung macrophages.</text>
</comment>
<comment type="function">
    <molecule>Hemolysin</molecule>
    <text evidence="1 13">Hemolysin that forms small cation-selective membrane channels, leading to hemolytic activity (PubMed:8077197). The hemolytic activity of CyaA is weak compared with that of the HlyA of E.coli (By similarity).</text>
</comment>
<comment type="catalytic activity">
    <molecule>Calmodulin-sensitive adenylate cyclase</molecule>
    <reaction evidence="6 7">
        <text>ATP = 3',5'-cyclic AMP + diphosphate</text>
        <dbReference type="Rhea" id="RHEA:15389"/>
        <dbReference type="ChEBI" id="CHEBI:30616"/>
        <dbReference type="ChEBI" id="CHEBI:33019"/>
        <dbReference type="ChEBI" id="CHEBI:58165"/>
        <dbReference type="EC" id="4.6.1.1"/>
    </reaction>
</comment>
<comment type="activity regulation">
    <molecule>Calmodulin-sensitive adenylate cyclase</molecule>
    <text evidence="7">Activated by host calmodulin.</text>
</comment>
<comment type="subcellular location">
    <subcellularLocation>
        <location evidence="7">Secreted</location>
    </subcellularLocation>
</comment>
<comment type="subcellular location">
    <molecule>Hemolysin</molecule>
    <subcellularLocation>
        <location evidence="16">Host cell membrane</location>
        <topology evidence="14">Multi-pass membrane protein</topology>
    </subcellularLocation>
</comment>
<comment type="domain">
    <text>The Gly-rich region is probably involved in binding calcium, which is required for target cell-binding or cytolytic activity.</text>
</comment>
<comment type="PTM">
    <text evidence="7">Released in a processed form.</text>
</comment>
<comment type="PTM">
    <molecule>Hemolysin</molecule>
    <text evidence="4 5 8 9 10 11 12">Palmitoylated at Lys-860 and Lys-983 by CyaC (PubMed:10196151, PubMed:11031260, PubMed:29625104, PubMed:32461253, PubMed:33011179, PubMed:7939682). The toxin only becomes active when modified in position Lys-983: palmitoylation is required for efficient membrane insertion and pore formation of the acylated Hemolysin chain (PubMed:11031260, PubMed:27993565, PubMed:32461253, PubMed:7939682).</text>
</comment>
<comment type="similarity">
    <text evidence="14">In the N-terminal section; belongs to the adenylyl cyclase class-2 family.</text>
</comment>
<comment type="similarity">
    <text evidence="14">In the C-terminal section; belongs to the RTX prokaryotic toxin family.</text>
</comment>
<sequence length="1706" mass="177521">MQQSHQAGYANAADRESGIPAAVLDGIKAVAKEKNATLMFRLVNPHSTSLIAEGVATKGLGVHAKSSDWGLQAGYIPVNPNLSKLFGRAPEVIARADNDVNSSLAHGHTAVDLTLSKERLDYLRQAGLVTGMADGVVASNHAGYEQFEFRVKETSDGRYAVQYRRKGGDDFEAVKVIGNAAGIPLTADIDMFAIMPHLSNFRDSARSSVTSGDSVTDYLARTRRAASEATGGLDRERIDLLWKIARAGARSAVGTEARRQFRYDGDMNIGVITDFELEVRNALNRRAHAVGAQDVVQHGTEQNNPFPEADEKIFVVSATGESQMLTRGQLKEYIGQQRGEGYVFYENRAYGVAGKSLFDDGLGAAPGVPSGRSKFSPDVLETVPASPGLRRPSLGAVERQDSGYDSLDGVGSRSFSLGEVSDMAAVEAAELEMTRQVLHAGARQDDAEPGVSGASAHWGQRALQGAQAVAAAQRLVHAIALMTQFGRAGSTNTPQEAASLSAAVFGLGEASSAVAETVSGFFRGSSRWAGGFGVAGGAMALGGGIAAAVGAGMSLTDDAPAGQKAAAGAEIALQLTGGTVELASSIALALAAARGVTSGLQVAGASAGAAAGALAAALSPMEIYGLVQQSHYADQLDKLAQESSAYGYEGDALLAQLYRDKTAAEGAVAGVSAVLSTVGAAVSIAAAASVVGAPVAVVTSLLTGALNGILRGVQQPIIEKLANDYARKIDELGGPQAYFEKNLQARHEQLANSDGLRKMLADLQAGWNASSVIGVQTTEISKSALELAAITGNADNLKSVDVFVDRFVQGERVAGQPVVLDVAAGGIDIASRKGERPALTFITPLAAPGEEQRRRTKTGKSEFTTFVEIVGKQDRWRIRDGAADTTIDLAKVVSQLVDANGVLKHSIKLDVIGGDGDDVVLANASRIHYDGGAGTNTVSYAALGRQDSITVSADGERFNVRKQLNNANVYREGVATQTTAYGKRTENVQYRHVELARVGQLVEVDTLEHVQHIIGGAGNDSITGNAHDNFLAGGSGDDRLDGGAGNDTLVGGEGQNTVIGGAGDDVFLQDLGVWSNQLDGGAGVDTVKYNVHQPSEERLERMGDTGIHADLQKGTVEKWPALNLFSVDHVKNIENLHGSRLNDRIAGDDQDNELWGHDGNDTIRGRGGDDILRGGLGLDTLYGEDGNDIFLQDDETVSDDIDGGAGLDTVDYSAMIHPGRIVAPHEYGFGIEADLSREWVRKASALGVDYYDNVRNVENVIGTSMKDVLIGDAQANTLMGQGGDDTVRGGDGDDLLFGGDGNDMLYGDAGNDTLYGGLGDDTLEGGAGNDWFGQTQAREHDVLRGGDGVDTVDYSQTGAHAGIAAGRIGLGILADLGAGRVDKLGEAGSSAYDTVSGIENVVGTELADRITGDAQANVLRGAGGADVLAGGEGDDVLLGGDGDDQLSGDAGRDRLYGEAGDDWFFQDAANAGNLLDGGDGRDTVDFSGPGRGLDAGAKGVFLSLGKGFASLMDEPETSNVLRNIENAVGSARDDVLIGDAGANVLNGLAGNDVLSGGAGDDVLLGDEGSDLLSGDAGNDDLFGGQGDDTYLFGVGYGHDTIYESGGGHDTIRINAGADQLWFARQGNDLEIRILGTDDALTVHDWYRDADHRVEIIHAANQAVDQAGIEKLVEAMAQYPDPGAAAAAPPAARVPDTLMQSLAVNWR</sequence>
<protein>
    <recommendedName>
        <fullName>Bifunctional hemolysin/adenylate cyclase</fullName>
    </recommendedName>
    <alternativeName>
        <fullName>AC-HLY</fullName>
    </alternativeName>
    <alternativeName>
        <fullName>ACT</fullName>
    </alternativeName>
    <alternativeName>
        <fullName>Cyclolysin</fullName>
    </alternativeName>
    <component>
        <recommendedName>
            <fullName>Calmodulin-sensitive adenylate cyclase</fullName>
            <ecNumber evidence="6 7">4.6.1.1</ecNumber>
        </recommendedName>
        <alternativeName>
            <fullName>ATP pyrophosphate-lyase</fullName>
        </alternativeName>
        <alternativeName>
            <fullName>Adenylyl cyclase</fullName>
        </alternativeName>
    </component>
    <component>
        <recommendedName>
            <fullName>Hemolysin</fullName>
        </recommendedName>
    </component>
</protein>
<name>CYAA_BORPE</name>
<feature type="chain" id="PRO_0000001320" description="Calmodulin-sensitive adenylate cyclase">
    <location>
        <begin position="1"/>
        <end position="312"/>
    </location>
</feature>
<feature type="chain" id="PRO_0000001321" description="Hemolysin" evidence="2">
    <location>
        <begin position="313"/>
        <end position="1706"/>
    </location>
</feature>
<feature type="repeat" description="Hemolysin-type calcium-binding 1">
    <location>
        <begin position="1014"/>
        <end position="1031"/>
    </location>
</feature>
<feature type="repeat" description="Hemolysin-type calcium-binding 2">
    <location>
        <begin position="1032"/>
        <end position="1049"/>
    </location>
</feature>
<feature type="repeat" description="Hemolysin-type calcium-binding 3">
    <location>
        <begin position="1050"/>
        <end position="1067"/>
    </location>
</feature>
<feature type="repeat" description="Hemolysin-type calcium-binding 4">
    <location>
        <begin position="1155"/>
        <end position="1172"/>
    </location>
</feature>
<feature type="repeat" description="Hemolysin-type calcium-binding 5">
    <location>
        <begin position="1173"/>
        <end position="1190"/>
    </location>
</feature>
<feature type="repeat" description="Hemolysin-type calcium-binding 6">
    <location>
        <begin position="1279"/>
        <end position="1296"/>
    </location>
</feature>
<feature type="repeat" description="Hemolysin-type calcium-binding 7">
    <location>
        <begin position="1297"/>
        <end position="1314"/>
    </location>
</feature>
<feature type="repeat" description="Hemolysin-type calcium-binding 8">
    <location>
        <begin position="1315"/>
        <end position="1332"/>
    </location>
</feature>
<feature type="repeat" description="Hemolysin-type calcium-binding 9">
    <location>
        <begin position="1335"/>
        <end position="1352"/>
    </location>
</feature>
<feature type="repeat" description="Hemolysin-type calcium-binding 10">
    <location>
        <begin position="1411"/>
        <end position="1428"/>
    </location>
</feature>
<feature type="repeat" description="Hemolysin-type calcium-binding 11">
    <location>
        <begin position="1429"/>
        <end position="1446"/>
    </location>
</feature>
<feature type="repeat" description="Hemolysin-type calcium-binding 12">
    <location>
        <begin position="1447"/>
        <end position="1464"/>
    </location>
</feature>
<feature type="repeat" description="Hemolysin-type calcium-binding 13">
    <location>
        <begin position="1468"/>
        <end position="1484"/>
    </location>
</feature>
<feature type="repeat" description="Hemolysin-type calcium-binding 14">
    <location>
        <begin position="1537"/>
        <end position="1554"/>
    </location>
</feature>
<feature type="repeat" description="Hemolysin-type calcium-binding 15">
    <location>
        <begin position="1555"/>
        <end position="1572"/>
    </location>
</feature>
<feature type="repeat" description="Hemolysin-type calcium-binding 16">
    <location>
        <begin position="1573"/>
        <end position="1590"/>
    </location>
</feature>
<feature type="repeat" description="Hemolysin-type calcium-binding 17">
    <location>
        <begin position="1603"/>
        <end position="1620"/>
    </location>
</feature>
<feature type="region of interest" description="A, catalytic" evidence="15">
    <location>
        <begin position="1"/>
        <end position="399"/>
    </location>
</feature>
<feature type="region of interest" description="Disordered" evidence="3">
    <location>
        <begin position="383"/>
        <end position="405"/>
    </location>
</feature>
<feature type="region of interest" description="B, Ala/Gly-rich" evidence="15">
    <location>
        <begin position="400"/>
        <end position="912"/>
    </location>
</feature>
<feature type="region of interest" description="Required for interaction with CyaC" evidence="9">
    <location>
        <begin position="500"/>
        <end position="698"/>
    </location>
</feature>
<feature type="region of interest" description="C" evidence="15">
    <location>
        <begin position="913"/>
        <end position="1656"/>
    </location>
</feature>
<feature type="region of interest" description="D, Asp/Gly-rich" evidence="15">
    <location>
        <begin position="1657"/>
        <end position="1706"/>
    </location>
</feature>
<feature type="binding site" evidence="2">
    <location>
        <begin position="349"/>
        <end position="356"/>
    </location>
    <ligand>
        <name>ATP</name>
        <dbReference type="ChEBI" id="CHEBI:30616"/>
    </ligand>
</feature>
<feature type="lipid moiety-binding region" description="N6-palmitoyl lysine" evidence="4 5 10">
    <location>
        <position position="860"/>
    </location>
</feature>
<feature type="lipid moiety-binding region" description="N6-palmitoyl lysine" evidence="5 8 9 10 11 12">
    <location>
        <position position="983"/>
    </location>
</feature>
<feature type="mutagenesis site" description="Abolished adenylate cyclase activity." evidence="7">
    <original>K</original>
    <variation>Q</variation>
    <location>
        <position position="58"/>
    </location>
</feature>
<feature type="mutagenesis site" description="Abolished adenylate cyclase activity." evidence="7">
    <original>K</original>
    <variation>Q</variation>
    <location>
        <position position="65"/>
    </location>
</feature>
<feature type="mutagenesis site" description="Loss of adenylate cyclase activity." evidence="6">
    <original>D</original>
    <variation>E</variation>
    <variation>N</variation>
    <variation>Y</variation>
    <variation>H</variation>
    <location>
        <position position="188"/>
    </location>
</feature>
<feature type="mutagenesis site" description="Loss of adenylate cyclase activity." evidence="6">
    <original>D</original>
    <variation>N</variation>
    <variation>Y</variation>
    <variation>H</variation>
    <location>
        <position position="190"/>
    </location>
</feature>
<feature type="mutagenesis site" description="Reduced affinity for altered affinity for calmodulin without affecting the adenylate cyclase activity." evidence="7">
    <original>W</original>
    <variation>D</variation>
    <variation>G</variation>
    <variation>R</variation>
    <variation>V</variation>
    <location>
        <position position="242"/>
    </location>
</feature>
<feature type="mutagenesis site" description="Loss of adenylate cyclase activity." evidence="6">
    <original>H</original>
    <variation>R</variation>
    <variation>P</variation>
    <variation>L</variation>
    <location>
        <position position="298"/>
    </location>
</feature>
<feature type="mutagenesis site" description="Loss of adenylate cyclase activity." evidence="6">
    <original>E</original>
    <variation>Q</variation>
    <variation>K</variation>
    <location>
        <position position="301"/>
    </location>
</feature>
<feature type="mutagenesis site" description="Does not affect ability of Hemolysin chain to be activated by CyaC." evidence="10">
    <original>K</original>
    <variation>R</variation>
    <location>
        <position position="860"/>
    </location>
</feature>
<feature type="helix" evidence="17">
    <location>
        <begin position="12"/>
        <end position="16"/>
    </location>
</feature>
<feature type="helix" evidence="17">
    <location>
        <begin position="21"/>
        <end position="33"/>
    </location>
</feature>
<feature type="strand" evidence="17">
    <location>
        <begin position="36"/>
        <end position="41"/>
    </location>
</feature>
<feature type="helix" evidence="17">
    <location>
        <begin position="45"/>
        <end position="52"/>
    </location>
</feature>
<feature type="helix" evidence="17">
    <location>
        <begin position="70"/>
        <end position="72"/>
    </location>
</feature>
<feature type="strand" evidence="17">
    <location>
        <begin position="77"/>
        <end position="79"/>
    </location>
</feature>
<feature type="helix" evidence="17">
    <location>
        <begin position="80"/>
        <end position="82"/>
    </location>
</feature>
<feature type="turn" evidence="17">
    <location>
        <begin position="84"/>
        <end position="87"/>
    </location>
</feature>
<feature type="helix" evidence="17">
    <location>
        <begin position="90"/>
        <end position="105"/>
    </location>
</feature>
<feature type="strand" evidence="17">
    <location>
        <begin position="109"/>
        <end position="112"/>
    </location>
</feature>
<feature type="helix" evidence="17">
    <location>
        <begin position="117"/>
        <end position="125"/>
    </location>
</feature>
<feature type="strand" evidence="17">
    <location>
        <begin position="131"/>
        <end position="138"/>
    </location>
</feature>
<feature type="helix" evidence="17">
    <location>
        <begin position="142"/>
        <end position="145"/>
    </location>
</feature>
<feature type="strand" evidence="17">
    <location>
        <begin position="147"/>
        <end position="153"/>
    </location>
</feature>
<feature type="strand" evidence="17">
    <location>
        <begin position="159"/>
        <end position="165"/>
    </location>
</feature>
<feature type="strand" evidence="18">
    <location>
        <begin position="168"/>
        <end position="173"/>
    </location>
</feature>
<feature type="strand" evidence="17">
    <location>
        <begin position="175"/>
        <end position="178"/>
    </location>
</feature>
<feature type="strand" evidence="17">
    <location>
        <begin position="184"/>
        <end position="186"/>
    </location>
</feature>
<feature type="strand" evidence="17">
    <location>
        <begin position="191"/>
        <end position="197"/>
    </location>
</feature>
<feature type="helix" evidence="17">
    <location>
        <begin position="198"/>
        <end position="201"/>
    </location>
</feature>
<feature type="helix" evidence="17">
    <location>
        <begin position="202"/>
        <end position="209"/>
    </location>
</feature>
<feature type="strand" evidence="17">
    <location>
        <begin position="210"/>
        <end position="212"/>
    </location>
</feature>
<feature type="helix" evidence="17">
    <location>
        <begin position="215"/>
        <end position="222"/>
    </location>
</feature>
<feature type="helix" evidence="17">
    <location>
        <begin position="235"/>
        <end position="252"/>
    </location>
</feature>
<feature type="turn" evidence="17">
    <location>
        <begin position="253"/>
        <end position="256"/>
    </location>
</feature>
<feature type="helix" evidence="17">
    <location>
        <begin position="257"/>
        <end position="259"/>
    </location>
</feature>
<feature type="strand" evidence="17">
    <location>
        <begin position="262"/>
        <end position="264"/>
    </location>
</feature>
<feature type="strand" evidence="17">
    <location>
        <begin position="267"/>
        <end position="271"/>
    </location>
</feature>
<feature type="helix" evidence="17">
    <location>
        <begin position="274"/>
        <end position="289"/>
    </location>
</feature>
<feature type="helix" evidence="17">
    <location>
        <begin position="301"/>
        <end position="303"/>
    </location>
</feature>
<feature type="strand" evidence="17">
    <location>
        <begin position="313"/>
        <end position="316"/>
    </location>
</feature>
<feature type="strand" evidence="17">
    <location>
        <begin position="322"/>
        <end position="325"/>
    </location>
</feature>
<feature type="helix" evidence="17">
    <location>
        <begin position="327"/>
        <end position="339"/>
    </location>
</feature>
<feature type="turn" evidence="17">
    <location>
        <begin position="348"/>
        <end position="354"/>
    </location>
</feature>
<feature type="helix" evidence="21">
    <location>
        <begin position="460"/>
        <end position="480"/>
    </location>
</feature>
<feature type="helix" evidence="23">
    <location>
        <begin position="756"/>
        <end position="766"/>
    </location>
</feature>
<feature type="strand" evidence="23">
    <location>
        <begin position="775"/>
        <end position="779"/>
    </location>
</feature>
<feature type="helix" evidence="23">
    <location>
        <begin position="782"/>
        <end position="791"/>
    </location>
</feature>
<feature type="strand" evidence="23">
    <location>
        <begin position="799"/>
        <end position="803"/>
    </location>
</feature>
<feature type="strand" evidence="23">
    <location>
        <begin position="819"/>
        <end position="821"/>
    </location>
</feature>
<feature type="turn" evidence="23">
    <location>
        <begin position="822"/>
        <end position="825"/>
    </location>
</feature>
<feature type="strand" evidence="23">
    <location>
        <begin position="826"/>
        <end position="828"/>
    </location>
</feature>
<feature type="strand" evidence="23">
    <location>
        <begin position="841"/>
        <end position="843"/>
    </location>
</feature>
<feature type="strand" evidence="23">
    <location>
        <begin position="851"/>
        <end position="853"/>
    </location>
</feature>
<feature type="strand" evidence="23">
    <location>
        <begin position="861"/>
        <end position="863"/>
    </location>
</feature>
<feature type="strand" evidence="23">
    <location>
        <begin position="867"/>
        <end position="869"/>
    </location>
</feature>
<feature type="strand" evidence="23">
    <location>
        <begin position="875"/>
        <end position="879"/>
    </location>
</feature>
<feature type="strand" evidence="23">
    <location>
        <begin position="886"/>
        <end position="888"/>
    </location>
</feature>
<feature type="strand" evidence="23">
    <location>
        <begin position="895"/>
        <end position="897"/>
    </location>
</feature>
<feature type="strand" evidence="23">
    <location>
        <begin position="903"/>
        <end position="905"/>
    </location>
</feature>
<feature type="strand" evidence="23">
    <location>
        <begin position="908"/>
        <end position="912"/>
    </location>
</feature>
<feature type="strand" evidence="23">
    <location>
        <begin position="919"/>
        <end position="921"/>
    </location>
</feature>
<feature type="strand" evidence="23">
    <location>
        <begin position="927"/>
        <end position="930"/>
    </location>
</feature>
<feature type="strand" evidence="23">
    <location>
        <begin position="937"/>
        <end position="939"/>
    </location>
</feature>
<feature type="strand" evidence="23">
    <location>
        <begin position="948"/>
        <end position="966"/>
    </location>
</feature>
<feature type="strand" evidence="23">
    <location>
        <begin position="968"/>
        <end position="975"/>
    </location>
</feature>
<feature type="strand" evidence="23">
    <location>
        <begin position="982"/>
        <end position="984"/>
    </location>
</feature>
<feature type="strand" evidence="23">
    <location>
        <begin position="990"/>
        <end position="997"/>
    </location>
</feature>
<feature type="strand" evidence="23">
    <location>
        <begin position="1001"/>
        <end position="1009"/>
    </location>
</feature>
<feature type="strand" evidence="23">
    <location>
        <begin position="1012"/>
        <end position="1014"/>
    </location>
</feature>
<feature type="strand" evidence="23">
    <location>
        <begin position="1021"/>
        <end position="1023"/>
    </location>
</feature>
<feature type="strand" evidence="23">
    <location>
        <begin position="1030"/>
        <end position="1032"/>
    </location>
</feature>
<feature type="strand" evidence="23">
    <location>
        <begin position="1035"/>
        <end position="1037"/>
    </location>
</feature>
<feature type="strand" evidence="23">
    <location>
        <begin position="1039"/>
        <end position="1041"/>
    </location>
</feature>
<feature type="strand" evidence="23">
    <location>
        <begin position="1044"/>
        <end position="1046"/>
    </location>
</feature>
<feature type="strand" evidence="23">
    <location>
        <begin position="1048"/>
        <end position="1050"/>
    </location>
</feature>
<feature type="strand" evidence="23">
    <location>
        <begin position="1053"/>
        <end position="1055"/>
    </location>
</feature>
<feature type="strand" evidence="22">
    <location>
        <begin position="1057"/>
        <end position="1059"/>
    </location>
</feature>
<feature type="strand" evidence="22">
    <location>
        <begin position="1066"/>
        <end position="1068"/>
    </location>
</feature>
<feature type="strand" evidence="22">
    <location>
        <begin position="1076"/>
        <end position="1079"/>
    </location>
</feature>
<feature type="strand" evidence="22">
    <location>
        <begin position="1086"/>
        <end position="1088"/>
    </location>
</feature>
<feature type="strand" evidence="22">
    <location>
        <begin position="1090"/>
        <end position="1092"/>
    </location>
</feature>
<feature type="helix" evidence="22">
    <location>
        <begin position="1096"/>
        <end position="1102"/>
    </location>
</feature>
<feature type="strand" evidence="22">
    <location>
        <begin position="1105"/>
        <end position="1110"/>
    </location>
</feature>
<feature type="turn" evidence="22">
    <location>
        <begin position="1111"/>
        <end position="1114"/>
    </location>
</feature>
<feature type="strand" evidence="22">
    <location>
        <begin position="1115"/>
        <end position="1119"/>
    </location>
</feature>
<feature type="turn" evidence="22">
    <location>
        <begin position="1120"/>
        <end position="1122"/>
    </location>
</feature>
<feature type="strand" evidence="22">
    <location>
        <begin position="1127"/>
        <end position="1132"/>
    </location>
</feature>
<feature type="strand" evidence="22">
    <location>
        <begin position="1135"/>
        <end position="1137"/>
    </location>
</feature>
<feature type="strand" evidence="22">
    <location>
        <begin position="1140"/>
        <end position="1146"/>
    </location>
</feature>
<feature type="strand" evidence="22">
    <location>
        <begin position="1153"/>
        <end position="1155"/>
    </location>
</feature>
<feature type="strand" evidence="22">
    <location>
        <begin position="1162"/>
        <end position="1164"/>
    </location>
</feature>
<feature type="strand" evidence="22">
    <location>
        <begin position="1171"/>
        <end position="1173"/>
    </location>
</feature>
<feature type="strand" evidence="22">
    <location>
        <begin position="1176"/>
        <end position="1178"/>
    </location>
</feature>
<feature type="strand" evidence="22">
    <location>
        <begin position="1180"/>
        <end position="1182"/>
    </location>
</feature>
<feature type="strand" evidence="22">
    <location>
        <begin position="1189"/>
        <end position="1191"/>
    </location>
</feature>
<feature type="strand" evidence="22">
    <location>
        <begin position="1200"/>
        <end position="1202"/>
    </location>
</feature>
<feature type="strand" evidence="22">
    <location>
        <begin position="1209"/>
        <end position="1211"/>
    </location>
</feature>
<feature type="helix" evidence="22">
    <location>
        <begin position="1213"/>
        <end position="1215"/>
    </location>
</feature>
<feature type="strand" evidence="22">
    <location>
        <begin position="1228"/>
        <end position="1234"/>
    </location>
</feature>
<feature type="turn" evidence="22">
    <location>
        <begin position="1235"/>
        <end position="1238"/>
    </location>
</feature>
<feature type="strand" evidence="22">
    <location>
        <begin position="1239"/>
        <end position="1245"/>
    </location>
</feature>
<feature type="strand" evidence="22">
    <location>
        <begin position="1248"/>
        <end position="1256"/>
    </location>
</feature>
<feature type="strand" evidence="22">
    <location>
        <begin position="1259"/>
        <end position="1261"/>
    </location>
</feature>
<feature type="strand" evidence="22">
    <location>
        <begin position="1264"/>
        <end position="1270"/>
    </location>
</feature>
<feature type="strand" evidence="22">
    <location>
        <begin position="1277"/>
        <end position="1279"/>
    </location>
</feature>
<feature type="strand" evidence="22">
    <location>
        <begin position="1282"/>
        <end position="1284"/>
    </location>
</feature>
<feature type="strand" evidence="22">
    <location>
        <begin position="1286"/>
        <end position="1288"/>
    </location>
</feature>
<feature type="strand" evidence="22">
    <location>
        <begin position="1295"/>
        <end position="1297"/>
    </location>
</feature>
<feature type="strand" evidence="22">
    <location>
        <begin position="1300"/>
        <end position="1302"/>
    </location>
</feature>
<feature type="strand" evidence="22">
    <location>
        <begin position="1304"/>
        <end position="1306"/>
    </location>
</feature>
<feature type="strand" evidence="22">
    <location>
        <begin position="1309"/>
        <end position="1311"/>
    </location>
</feature>
<feature type="strand" evidence="22">
    <location>
        <begin position="1313"/>
        <end position="1315"/>
    </location>
</feature>
<feature type="strand" evidence="22">
    <location>
        <begin position="1322"/>
        <end position="1324"/>
    </location>
</feature>
<feature type="strand" evidence="23">
    <location>
        <begin position="1331"/>
        <end position="1333"/>
    </location>
</feature>
<feature type="strand" evidence="22">
    <location>
        <begin position="1342"/>
        <end position="1344"/>
    </location>
</feature>
<feature type="strand" evidence="23">
    <location>
        <begin position="1351"/>
        <end position="1353"/>
    </location>
</feature>
<feature type="strand" evidence="23">
    <location>
        <begin position="1373"/>
        <end position="1375"/>
    </location>
</feature>
<feature type="turn" evidence="23">
    <location>
        <begin position="1376"/>
        <end position="1379"/>
    </location>
</feature>
<feature type="strand" evidence="23">
    <location>
        <begin position="1380"/>
        <end position="1382"/>
    </location>
</feature>
<feature type="strand" evidence="23">
    <location>
        <begin position="1390"/>
        <end position="1397"/>
    </location>
</feature>
<feature type="strand" evidence="23">
    <location>
        <begin position="1400"/>
        <end position="1402"/>
    </location>
</feature>
<feature type="strand" evidence="23">
    <location>
        <begin position="1409"/>
        <end position="1411"/>
    </location>
</feature>
<feature type="strand" evidence="20">
    <location>
        <begin position="1418"/>
        <end position="1420"/>
    </location>
</feature>
<feature type="strand" evidence="20">
    <location>
        <begin position="1427"/>
        <end position="1429"/>
    </location>
</feature>
<feature type="strand" evidence="23">
    <location>
        <begin position="1432"/>
        <end position="1434"/>
    </location>
</feature>
<feature type="strand" evidence="20">
    <location>
        <begin position="1436"/>
        <end position="1438"/>
    </location>
</feature>
<feature type="strand" evidence="20">
    <location>
        <begin position="1445"/>
        <end position="1447"/>
    </location>
</feature>
<feature type="strand" evidence="23">
    <location>
        <begin position="1450"/>
        <end position="1452"/>
    </location>
</feature>
<feature type="strand" evidence="20">
    <location>
        <begin position="1454"/>
        <end position="1456"/>
    </location>
</feature>
<feature type="strand" evidence="20">
    <location>
        <begin position="1463"/>
        <end position="1465"/>
    </location>
</feature>
<feature type="strand" evidence="20">
    <location>
        <begin position="1474"/>
        <end position="1476"/>
    </location>
</feature>
<feature type="strand" evidence="20">
    <location>
        <begin position="1483"/>
        <end position="1485"/>
    </location>
</feature>
<feature type="strand" evidence="20">
    <location>
        <begin position="1500"/>
        <end position="1503"/>
    </location>
</feature>
<feature type="turn" evidence="20">
    <location>
        <begin position="1504"/>
        <end position="1507"/>
    </location>
</feature>
<feature type="strand" evidence="20">
    <location>
        <begin position="1508"/>
        <end position="1511"/>
    </location>
</feature>
<feature type="strand" evidence="20">
    <location>
        <begin position="1514"/>
        <end position="1523"/>
    </location>
</feature>
<feature type="strand" evidence="20">
    <location>
        <begin position="1526"/>
        <end position="1528"/>
    </location>
</feature>
<feature type="strand" evidence="19">
    <location>
        <begin position="1535"/>
        <end position="1537"/>
    </location>
</feature>
<feature type="strand" evidence="19">
    <location>
        <begin position="1544"/>
        <end position="1546"/>
    </location>
</feature>
<feature type="strand" evidence="19">
    <location>
        <begin position="1553"/>
        <end position="1555"/>
    </location>
</feature>
<feature type="strand" evidence="19">
    <location>
        <begin position="1562"/>
        <end position="1564"/>
    </location>
</feature>
<feature type="strand" evidence="19">
    <location>
        <begin position="1571"/>
        <end position="1573"/>
    </location>
</feature>
<feature type="strand" evidence="19">
    <location>
        <begin position="1580"/>
        <end position="1582"/>
    </location>
</feature>
<feature type="strand" evidence="19">
    <location>
        <begin position="1589"/>
        <end position="1593"/>
    </location>
</feature>
<feature type="strand" evidence="19">
    <location>
        <begin position="1598"/>
        <end position="1601"/>
    </location>
</feature>
<feature type="strand" evidence="19">
    <location>
        <begin position="1610"/>
        <end position="1615"/>
    </location>
</feature>
<feature type="helix" evidence="19">
    <location>
        <begin position="1617"/>
        <end position="1619"/>
    </location>
</feature>
<feature type="strand" evidence="19">
    <location>
        <begin position="1620"/>
        <end position="1625"/>
    </location>
</feature>
<feature type="strand" evidence="19">
    <location>
        <begin position="1628"/>
        <end position="1633"/>
    </location>
</feature>
<feature type="strand" evidence="19">
    <location>
        <begin position="1639"/>
        <end position="1642"/>
    </location>
</feature>
<feature type="turn" evidence="19">
    <location>
        <begin position="1643"/>
        <end position="1647"/>
    </location>
</feature>
<feature type="helix" evidence="19">
    <location>
        <begin position="1649"/>
        <end position="1651"/>
    </location>
</feature>
<feature type="strand" evidence="19">
    <location>
        <begin position="1654"/>
        <end position="1658"/>
    </location>
</feature>
<feature type="strand" evidence="19">
    <location>
        <begin position="1661"/>
        <end position="1664"/>
    </location>
</feature>
<feature type="helix" evidence="19">
    <location>
        <begin position="1665"/>
        <end position="1674"/>
    </location>
</feature>
<keyword id="KW-0002">3D-structure</keyword>
<keyword id="KW-0067">ATP-binding</keyword>
<keyword id="KW-0106">Calcium</keyword>
<keyword id="KW-0112">Calmodulin-binding</keyword>
<keyword id="KW-0115">cAMP biosynthesis</keyword>
<keyword id="KW-0204">Cytolysis</keyword>
<keyword id="KW-0354">Hemolysis</keyword>
<keyword id="KW-1032">Host cell membrane</keyword>
<keyword id="KW-1043">Host membrane</keyword>
<keyword id="KW-0449">Lipoprotein</keyword>
<keyword id="KW-0456">Lyase</keyword>
<keyword id="KW-0472">Membrane</keyword>
<keyword id="KW-0519">Myristate</keyword>
<keyword id="KW-0547">Nucleotide-binding</keyword>
<keyword id="KW-0564">Palmitate</keyword>
<keyword id="KW-1185">Reference proteome</keyword>
<keyword id="KW-0677">Repeat</keyword>
<keyword id="KW-0964">Secreted</keyword>
<keyword id="KW-0800">Toxin</keyword>
<keyword id="KW-0812">Transmembrane</keyword>
<keyword id="KW-0843">Virulence</keyword>
<keyword id="KW-0855">Whooping cough</keyword>
<gene>
    <name type="primary">cya</name>
    <name type="synonym">cyaA</name>
    <name type="ordered locus">BP0760</name>
</gene>